<dbReference type="EC" id="2.7.7.3" evidence="1"/>
<dbReference type="EMBL" id="CP000903">
    <property type="protein sequence ID" value="ABY44925.1"/>
    <property type="molecule type" value="Genomic_DNA"/>
</dbReference>
<dbReference type="RefSeq" id="WP_002142952.1">
    <property type="nucleotide sequence ID" value="NC_010184.1"/>
</dbReference>
<dbReference type="SMR" id="A9VU91"/>
<dbReference type="GeneID" id="66266504"/>
<dbReference type="KEGG" id="bwe:BcerKBAB4_3756"/>
<dbReference type="eggNOG" id="COG0669">
    <property type="taxonomic scope" value="Bacteria"/>
</dbReference>
<dbReference type="HOGENOM" id="CLU_100149_0_1_9"/>
<dbReference type="UniPathway" id="UPA00241">
    <property type="reaction ID" value="UER00355"/>
</dbReference>
<dbReference type="Proteomes" id="UP000002154">
    <property type="component" value="Chromosome"/>
</dbReference>
<dbReference type="GO" id="GO:0005737">
    <property type="term" value="C:cytoplasm"/>
    <property type="evidence" value="ECO:0007669"/>
    <property type="project" value="UniProtKB-SubCell"/>
</dbReference>
<dbReference type="GO" id="GO:0005524">
    <property type="term" value="F:ATP binding"/>
    <property type="evidence" value="ECO:0007669"/>
    <property type="project" value="UniProtKB-KW"/>
</dbReference>
<dbReference type="GO" id="GO:0004595">
    <property type="term" value="F:pantetheine-phosphate adenylyltransferase activity"/>
    <property type="evidence" value="ECO:0007669"/>
    <property type="project" value="UniProtKB-UniRule"/>
</dbReference>
<dbReference type="GO" id="GO:0015937">
    <property type="term" value="P:coenzyme A biosynthetic process"/>
    <property type="evidence" value="ECO:0007669"/>
    <property type="project" value="UniProtKB-UniRule"/>
</dbReference>
<dbReference type="CDD" id="cd02163">
    <property type="entry name" value="PPAT"/>
    <property type="match status" value="1"/>
</dbReference>
<dbReference type="FunFam" id="3.40.50.620:FF:000012">
    <property type="entry name" value="Phosphopantetheine adenylyltransferase"/>
    <property type="match status" value="1"/>
</dbReference>
<dbReference type="Gene3D" id="3.40.50.620">
    <property type="entry name" value="HUPs"/>
    <property type="match status" value="1"/>
</dbReference>
<dbReference type="HAMAP" id="MF_00151">
    <property type="entry name" value="PPAT_bact"/>
    <property type="match status" value="1"/>
</dbReference>
<dbReference type="InterPro" id="IPR004821">
    <property type="entry name" value="Cyt_trans-like"/>
</dbReference>
<dbReference type="InterPro" id="IPR001980">
    <property type="entry name" value="PPAT"/>
</dbReference>
<dbReference type="InterPro" id="IPR014729">
    <property type="entry name" value="Rossmann-like_a/b/a_fold"/>
</dbReference>
<dbReference type="NCBIfam" id="TIGR01510">
    <property type="entry name" value="coaD_prev_kdtB"/>
    <property type="match status" value="1"/>
</dbReference>
<dbReference type="NCBIfam" id="TIGR00125">
    <property type="entry name" value="cyt_tran_rel"/>
    <property type="match status" value="1"/>
</dbReference>
<dbReference type="PANTHER" id="PTHR21342">
    <property type="entry name" value="PHOSPHOPANTETHEINE ADENYLYLTRANSFERASE"/>
    <property type="match status" value="1"/>
</dbReference>
<dbReference type="PANTHER" id="PTHR21342:SF1">
    <property type="entry name" value="PHOSPHOPANTETHEINE ADENYLYLTRANSFERASE"/>
    <property type="match status" value="1"/>
</dbReference>
<dbReference type="Pfam" id="PF01467">
    <property type="entry name" value="CTP_transf_like"/>
    <property type="match status" value="1"/>
</dbReference>
<dbReference type="PRINTS" id="PR01020">
    <property type="entry name" value="LPSBIOSNTHSS"/>
</dbReference>
<dbReference type="SUPFAM" id="SSF52374">
    <property type="entry name" value="Nucleotidylyl transferase"/>
    <property type="match status" value="1"/>
</dbReference>
<keyword id="KW-0067">ATP-binding</keyword>
<keyword id="KW-0173">Coenzyme A biosynthesis</keyword>
<keyword id="KW-0963">Cytoplasm</keyword>
<keyword id="KW-0460">Magnesium</keyword>
<keyword id="KW-0547">Nucleotide-binding</keyword>
<keyword id="KW-0548">Nucleotidyltransferase</keyword>
<keyword id="KW-0808">Transferase</keyword>
<feature type="chain" id="PRO_1000096762" description="Phosphopantetheine adenylyltransferase">
    <location>
        <begin position="1"/>
        <end position="163"/>
    </location>
</feature>
<feature type="binding site" evidence="1">
    <location>
        <begin position="10"/>
        <end position="11"/>
    </location>
    <ligand>
        <name>ATP</name>
        <dbReference type="ChEBI" id="CHEBI:30616"/>
    </ligand>
</feature>
<feature type="binding site" evidence="1">
    <location>
        <position position="10"/>
    </location>
    <ligand>
        <name>substrate</name>
    </ligand>
</feature>
<feature type="binding site" evidence="1">
    <location>
        <position position="18"/>
    </location>
    <ligand>
        <name>ATP</name>
        <dbReference type="ChEBI" id="CHEBI:30616"/>
    </ligand>
</feature>
<feature type="binding site" evidence="1">
    <location>
        <position position="42"/>
    </location>
    <ligand>
        <name>substrate</name>
    </ligand>
</feature>
<feature type="binding site" evidence="1">
    <location>
        <position position="74"/>
    </location>
    <ligand>
        <name>substrate</name>
    </ligand>
</feature>
<feature type="binding site" evidence="1">
    <location>
        <position position="88"/>
    </location>
    <ligand>
        <name>substrate</name>
    </ligand>
</feature>
<feature type="binding site" evidence="1">
    <location>
        <begin position="89"/>
        <end position="91"/>
    </location>
    <ligand>
        <name>ATP</name>
        <dbReference type="ChEBI" id="CHEBI:30616"/>
    </ligand>
</feature>
<feature type="binding site" evidence="1">
    <location>
        <position position="99"/>
    </location>
    <ligand>
        <name>ATP</name>
        <dbReference type="ChEBI" id="CHEBI:30616"/>
    </ligand>
</feature>
<feature type="binding site" evidence="1">
    <location>
        <begin position="124"/>
        <end position="130"/>
    </location>
    <ligand>
        <name>ATP</name>
        <dbReference type="ChEBI" id="CHEBI:30616"/>
    </ligand>
</feature>
<feature type="site" description="Transition state stabilizer" evidence="1">
    <location>
        <position position="18"/>
    </location>
</feature>
<comment type="function">
    <text evidence="1">Reversibly transfers an adenylyl group from ATP to 4'-phosphopantetheine, yielding dephospho-CoA (dPCoA) and pyrophosphate.</text>
</comment>
<comment type="catalytic activity">
    <reaction evidence="1">
        <text>(R)-4'-phosphopantetheine + ATP + H(+) = 3'-dephospho-CoA + diphosphate</text>
        <dbReference type="Rhea" id="RHEA:19801"/>
        <dbReference type="ChEBI" id="CHEBI:15378"/>
        <dbReference type="ChEBI" id="CHEBI:30616"/>
        <dbReference type="ChEBI" id="CHEBI:33019"/>
        <dbReference type="ChEBI" id="CHEBI:57328"/>
        <dbReference type="ChEBI" id="CHEBI:61723"/>
        <dbReference type="EC" id="2.7.7.3"/>
    </reaction>
</comment>
<comment type="cofactor">
    <cofactor evidence="1">
        <name>Mg(2+)</name>
        <dbReference type="ChEBI" id="CHEBI:18420"/>
    </cofactor>
</comment>
<comment type="pathway">
    <text evidence="1">Cofactor biosynthesis; coenzyme A biosynthesis; CoA from (R)-pantothenate: step 4/5.</text>
</comment>
<comment type="subunit">
    <text evidence="1">Homohexamer.</text>
</comment>
<comment type="subcellular location">
    <subcellularLocation>
        <location evidence="1">Cytoplasm</location>
    </subcellularLocation>
</comment>
<comment type="similarity">
    <text evidence="1">Belongs to the bacterial CoaD family.</text>
</comment>
<organism>
    <name type="scientific">Bacillus mycoides (strain KBAB4)</name>
    <name type="common">Bacillus weihenstephanensis</name>
    <dbReference type="NCBI Taxonomy" id="315730"/>
    <lineage>
        <taxon>Bacteria</taxon>
        <taxon>Bacillati</taxon>
        <taxon>Bacillota</taxon>
        <taxon>Bacilli</taxon>
        <taxon>Bacillales</taxon>
        <taxon>Bacillaceae</taxon>
        <taxon>Bacillus</taxon>
        <taxon>Bacillus cereus group</taxon>
    </lineage>
</organism>
<protein>
    <recommendedName>
        <fullName evidence="1">Phosphopantetheine adenylyltransferase</fullName>
        <ecNumber evidence="1">2.7.7.3</ecNumber>
    </recommendedName>
    <alternativeName>
        <fullName evidence="1">Dephospho-CoA pyrophosphorylase</fullName>
    </alternativeName>
    <alternativeName>
        <fullName evidence="1">Pantetheine-phosphate adenylyltransferase</fullName>
        <shortName evidence="1">PPAT</shortName>
    </alternativeName>
</protein>
<reference key="1">
    <citation type="journal article" date="2008" name="Chem. Biol. Interact.">
        <title>Extending the Bacillus cereus group genomics to putative food-borne pathogens of different toxicity.</title>
        <authorList>
            <person name="Lapidus A."/>
            <person name="Goltsman E."/>
            <person name="Auger S."/>
            <person name="Galleron N."/>
            <person name="Segurens B."/>
            <person name="Dossat C."/>
            <person name="Land M.L."/>
            <person name="Broussolle V."/>
            <person name="Brillard J."/>
            <person name="Guinebretiere M.-H."/>
            <person name="Sanchis V."/>
            <person name="Nguen-the C."/>
            <person name="Lereclus D."/>
            <person name="Richardson P."/>
            <person name="Wincker P."/>
            <person name="Weissenbach J."/>
            <person name="Ehrlich S.D."/>
            <person name="Sorokin A."/>
        </authorList>
    </citation>
    <scope>NUCLEOTIDE SEQUENCE [LARGE SCALE GENOMIC DNA]</scope>
    <source>
        <strain>KBAB4</strain>
    </source>
</reference>
<gene>
    <name evidence="1" type="primary">coaD</name>
    <name type="ordered locus">BcerKBAB4_3756</name>
</gene>
<name>COAD_BACMK</name>
<sequence length="163" mass="18380">MTSIAISSGSFDPITLGHLDIIKRGAKVFDEVYVVVLNNSSKKPFFSVEERLELIREATKDIPNVKVDSHSGLLVEYAKMRNANAILRGLRAVSDFEYEMQITSMNRKLDESIETFFIMTNNQYSFLSSSIVKEVARYGGSVVDLVPPIVERALKEKFKTPLK</sequence>
<evidence type="ECO:0000255" key="1">
    <source>
        <dbReference type="HAMAP-Rule" id="MF_00151"/>
    </source>
</evidence>
<accession>A9VU91</accession>
<proteinExistence type="inferred from homology"/>